<name>CENPA_EREGS</name>
<proteinExistence type="inferred from homology"/>
<dbReference type="EMBL" id="AE016815">
    <property type="protein sequence ID" value="AAS50853.2"/>
    <property type="molecule type" value="Genomic_DNA"/>
</dbReference>
<dbReference type="RefSeq" id="NP_983029.2">
    <property type="nucleotide sequence ID" value="NM_208382.2"/>
</dbReference>
<dbReference type="SMR" id="Q75DE4"/>
<dbReference type="FunCoup" id="Q75DE4">
    <property type="interactions" value="387"/>
</dbReference>
<dbReference type="STRING" id="284811.Q75DE4"/>
<dbReference type="EnsemblFungi" id="AAS50853">
    <property type="protein sequence ID" value="AAS50853"/>
    <property type="gene ID" value="AGOS_ABR083C"/>
</dbReference>
<dbReference type="GeneID" id="4619133"/>
<dbReference type="KEGG" id="ago:AGOS_ABR083C"/>
<dbReference type="eggNOG" id="KOG1745">
    <property type="taxonomic scope" value="Eukaryota"/>
</dbReference>
<dbReference type="HOGENOM" id="CLU_078295_3_0_1"/>
<dbReference type="InParanoid" id="Q75DE4"/>
<dbReference type="OMA" id="KRITIMR"/>
<dbReference type="OrthoDB" id="842664at2759"/>
<dbReference type="Proteomes" id="UP000000591">
    <property type="component" value="Chromosome II"/>
</dbReference>
<dbReference type="GO" id="GO:0005729">
    <property type="term" value="C:2-micrometer circle DNA"/>
    <property type="evidence" value="ECO:0007669"/>
    <property type="project" value="EnsemblFungi"/>
</dbReference>
<dbReference type="GO" id="GO:0043505">
    <property type="term" value="C:CENP-A containing nucleosome"/>
    <property type="evidence" value="ECO:0007669"/>
    <property type="project" value="EnsemblFungi"/>
</dbReference>
<dbReference type="GO" id="GO:0000776">
    <property type="term" value="C:kinetochore"/>
    <property type="evidence" value="ECO:0007669"/>
    <property type="project" value="EnsemblFungi"/>
</dbReference>
<dbReference type="GO" id="GO:0005634">
    <property type="term" value="C:nucleus"/>
    <property type="evidence" value="ECO:0000318"/>
    <property type="project" value="GO_Central"/>
</dbReference>
<dbReference type="GO" id="GO:0005777">
    <property type="term" value="C:peroxisome"/>
    <property type="evidence" value="ECO:0007669"/>
    <property type="project" value="EnsemblFungi"/>
</dbReference>
<dbReference type="GO" id="GO:0019237">
    <property type="term" value="F:centromeric DNA binding"/>
    <property type="evidence" value="ECO:0007669"/>
    <property type="project" value="EnsemblFungi"/>
</dbReference>
<dbReference type="GO" id="GO:0046982">
    <property type="term" value="F:protein heterodimerization activity"/>
    <property type="evidence" value="ECO:0007669"/>
    <property type="project" value="InterPro"/>
</dbReference>
<dbReference type="GO" id="GO:0030527">
    <property type="term" value="F:structural constituent of chromatin"/>
    <property type="evidence" value="ECO:0007669"/>
    <property type="project" value="InterPro"/>
</dbReference>
<dbReference type="GO" id="GO:0030543">
    <property type="term" value="P:2-micrometer plasmid partitioning"/>
    <property type="evidence" value="ECO:0007669"/>
    <property type="project" value="EnsemblFungi"/>
</dbReference>
<dbReference type="GO" id="GO:0051382">
    <property type="term" value="P:kinetochore assembly"/>
    <property type="evidence" value="ECO:0007669"/>
    <property type="project" value="EnsemblFungi"/>
</dbReference>
<dbReference type="GO" id="GO:0000070">
    <property type="term" value="P:mitotic sister chromatid segregation"/>
    <property type="evidence" value="ECO:0007669"/>
    <property type="project" value="EnsemblFungi"/>
</dbReference>
<dbReference type="GO" id="GO:0061644">
    <property type="term" value="P:protein localization to CENP-A containing chromatin"/>
    <property type="evidence" value="ECO:0007669"/>
    <property type="project" value="EnsemblFungi"/>
</dbReference>
<dbReference type="GO" id="GO:0009303">
    <property type="term" value="P:rRNA transcription"/>
    <property type="evidence" value="ECO:0000318"/>
    <property type="project" value="GO_Central"/>
</dbReference>
<dbReference type="CDD" id="cd22911">
    <property type="entry name" value="HFD_H3"/>
    <property type="match status" value="1"/>
</dbReference>
<dbReference type="FunFam" id="1.10.20.10:FF:000102">
    <property type="entry name" value="Histone H3-like centromeric protein CSE4"/>
    <property type="match status" value="1"/>
</dbReference>
<dbReference type="Gene3D" id="1.10.20.10">
    <property type="entry name" value="Histone, subunit A"/>
    <property type="match status" value="1"/>
</dbReference>
<dbReference type="InterPro" id="IPR009072">
    <property type="entry name" value="Histone-fold"/>
</dbReference>
<dbReference type="InterPro" id="IPR007125">
    <property type="entry name" value="Histone_H2A/H2B/H3"/>
</dbReference>
<dbReference type="InterPro" id="IPR000164">
    <property type="entry name" value="Histone_H3/CENP-A"/>
</dbReference>
<dbReference type="PANTHER" id="PTHR45810">
    <property type="entry name" value="HISTONE H3.2"/>
    <property type="match status" value="1"/>
</dbReference>
<dbReference type="Pfam" id="PF00125">
    <property type="entry name" value="Histone"/>
    <property type="match status" value="1"/>
</dbReference>
<dbReference type="PRINTS" id="PR00622">
    <property type="entry name" value="HISTONEH3"/>
</dbReference>
<dbReference type="SMART" id="SM00428">
    <property type="entry name" value="H3"/>
    <property type="match status" value="1"/>
</dbReference>
<dbReference type="SUPFAM" id="SSF47113">
    <property type="entry name" value="Histone-fold"/>
    <property type="match status" value="1"/>
</dbReference>
<dbReference type="PROSITE" id="PS00959">
    <property type="entry name" value="HISTONE_H3_2"/>
    <property type="match status" value="1"/>
</dbReference>
<accession>Q75DE4</accession>
<reference key="1">
    <citation type="journal article" date="2004" name="Science">
        <title>The Ashbya gossypii genome as a tool for mapping the ancient Saccharomyces cerevisiae genome.</title>
        <authorList>
            <person name="Dietrich F.S."/>
            <person name="Voegeli S."/>
            <person name="Brachat S."/>
            <person name="Lerch A."/>
            <person name="Gates K."/>
            <person name="Steiner S."/>
            <person name="Mohr C."/>
            <person name="Poehlmann R."/>
            <person name="Luedi P."/>
            <person name="Choi S."/>
            <person name="Wing R.A."/>
            <person name="Flavier A."/>
            <person name="Gaffney T.D."/>
            <person name="Philippsen P."/>
        </authorList>
    </citation>
    <scope>NUCLEOTIDE SEQUENCE [LARGE SCALE GENOMIC DNA]</scope>
    <source>
        <strain>ATCC 10895 / CBS 109.51 / FGSC 9923 / NRRL Y-1056</strain>
    </source>
</reference>
<reference key="2">
    <citation type="journal article" date="2013" name="G3 (Bethesda)">
        <title>Genomes of Ashbya fungi isolated from insects reveal four mating-type loci, numerous translocations, lack of transposons, and distinct gene duplications.</title>
        <authorList>
            <person name="Dietrich F.S."/>
            <person name="Voegeli S."/>
            <person name="Kuo S."/>
            <person name="Philippsen P."/>
        </authorList>
    </citation>
    <scope>GENOME REANNOTATION</scope>
    <scope>SEQUENCE REVISION TO 88</scope>
    <source>
        <strain>ATCC 10895 / CBS 109.51 / FGSC 9923 / NRRL Y-1056</strain>
    </source>
</reference>
<sequence length="204" mass="23919">MEQSMSSEQAERVAGRVEQLGGFQNNESINQRALLLLQRNRQRRQLLQRQEDRTRYIPDDAKRRVVERVAEPAAAESRADGAREEERAARPARPRETRRIAKKPQRYRPSDVALQEIRRYQRSTELLISRMPFARLVKEVTDQFTTVDQQMRWQSMAILALQEASEAYIVGLLEHTNLLALHAKRVTVMRKDMQLARRIRGQFI</sequence>
<gene>
    <name type="primary">CSE4</name>
    <name type="ordered locus">ABR083C</name>
</gene>
<evidence type="ECO:0000250" key="1">
    <source>
        <dbReference type="UniProtKB" id="P36012"/>
    </source>
</evidence>
<evidence type="ECO:0000256" key="2">
    <source>
        <dbReference type="SAM" id="MobiDB-lite"/>
    </source>
</evidence>
<evidence type="ECO:0000305" key="3"/>
<feature type="chain" id="PRO_0000270595" description="Histone H3-like centromeric protein CSE4">
    <location>
        <begin position="1"/>
        <end position="204"/>
    </location>
</feature>
<feature type="region of interest" description="Disordered" evidence="2">
    <location>
        <begin position="68"/>
        <end position="107"/>
    </location>
</feature>
<feature type="region of interest" description="H3-like">
    <location>
        <begin position="89"/>
        <end position="202"/>
    </location>
</feature>
<feature type="compositionally biased region" description="Basic and acidic residues" evidence="2">
    <location>
        <begin position="77"/>
        <end position="99"/>
    </location>
</feature>
<comment type="function">
    <text evidence="1">Histone H3-like nucleosomal protein that is specifically found in centromeric nucleosomes. Replaces conventional H3 in the nucleosome core of centromeric chromatin that serves as an assembly site for the inner kinetochore. Required for recruitment and assembly of kinetochore proteins, mitotic progression and chromosome segregation. May serve as an epigenetic mark that propagates centromere identity through replication and cell division (By similarity).</text>
</comment>
<comment type="subunit">
    <text evidence="1">Component of centromeric nucleosomes, where DNA is wrapped around a histone octamer core. The octamer contains two molecules each of H2A, H2B, CSE4/CENPA and H4 assembled in one CSE4-H4 heterotetramer and two H2A-H2B heterodimers. Interacts with the inner kinetochore.</text>
</comment>
<comment type="subcellular location">
    <subcellularLocation>
        <location evidence="1">Nucleus</location>
    </subcellularLocation>
    <subcellularLocation>
        <location evidence="1">Chromosome</location>
        <location evidence="1">Centromere</location>
    </subcellularLocation>
</comment>
<comment type="PTM">
    <text evidence="1">Ubiquitinated. Is degraded through ubiquitin-mediated proteolysis when not protected by its association to the kinetochore.</text>
</comment>
<comment type="similarity">
    <text evidence="3">Belongs to the histone H3 family.</text>
</comment>
<keyword id="KW-0137">Centromere</keyword>
<keyword id="KW-0158">Chromosome</keyword>
<keyword id="KW-0238">DNA-binding</keyword>
<keyword id="KW-0544">Nucleosome core</keyword>
<keyword id="KW-0539">Nucleus</keyword>
<keyword id="KW-1185">Reference proteome</keyword>
<keyword id="KW-0832">Ubl conjugation</keyword>
<organism>
    <name type="scientific">Eremothecium gossypii (strain ATCC 10895 / CBS 109.51 / FGSC 9923 / NRRL Y-1056)</name>
    <name type="common">Yeast</name>
    <name type="synonym">Ashbya gossypii</name>
    <dbReference type="NCBI Taxonomy" id="284811"/>
    <lineage>
        <taxon>Eukaryota</taxon>
        <taxon>Fungi</taxon>
        <taxon>Dikarya</taxon>
        <taxon>Ascomycota</taxon>
        <taxon>Saccharomycotina</taxon>
        <taxon>Saccharomycetes</taxon>
        <taxon>Saccharomycetales</taxon>
        <taxon>Saccharomycetaceae</taxon>
        <taxon>Eremothecium</taxon>
    </lineage>
</organism>
<protein>
    <recommendedName>
        <fullName>Histone H3-like centromeric protein CSE4</fullName>
    </recommendedName>
    <alternativeName>
        <fullName>CENP-A homolog</fullName>
    </alternativeName>
    <alternativeName>
        <fullName evidence="3">CENPA homolog</fullName>
    </alternativeName>
</protein>